<reference key="1">
    <citation type="journal article" date="2000" name="Nature">
        <title>Sequence and analysis of chromosome 1 of the plant Arabidopsis thaliana.</title>
        <authorList>
            <person name="Theologis A."/>
            <person name="Ecker J.R."/>
            <person name="Palm C.J."/>
            <person name="Federspiel N.A."/>
            <person name="Kaul S."/>
            <person name="White O."/>
            <person name="Alonso J."/>
            <person name="Altafi H."/>
            <person name="Araujo R."/>
            <person name="Bowman C.L."/>
            <person name="Brooks S.Y."/>
            <person name="Buehler E."/>
            <person name="Chan A."/>
            <person name="Chao Q."/>
            <person name="Chen H."/>
            <person name="Cheuk R.F."/>
            <person name="Chin C.W."/>
            <person name="Chung M.K."/>
            <person name="Conn L."/>
            <person name="Conway A.B."/>
            <person name="Conway A.R."/>
            <person name="Creasy T.H."/>
            <person name="Dewar K."/>
            <person name="Dunn P."/>
            <person name="Etgu P."/>
            <person name="Feldblyum T.V."/>
            <person name="Feng J.-D."/>
            <person name="Fong B."/>
            <person name="Fujii C.Y."/>
            <person name="Gill J.E."/>
            <person name="Goldsmith A.D."/>
            <person name="Haas B."/>
            <person name="Hansen N.F."/>
            <person name="Hughes B."/>
            <person name="Huizar L."/>
            <person name="Hunter J.L."/>
            <person name="Jenkins J."/>
            <person name="Johnson-Hopson C."/>
            <person name="Khan S."/>
            <person name="Khaykin E."/>
            <person name="Kim C.J."/>
            <person name="Koo H.L."/>
            <person name="Kremenetskaia I."/>
            <person name="Kurtz D.B."/>
            <person name="Kwan A."/>
            <person name="Lam B."/>
            <person name="Langin-Hooper S."/>
            <person name="Lee A."/>
            <person name="Lee J.M."/>
            <person name="Lenz C.A."/>
            <person name="Li J.H."/>
            <person name="Li Y.-P."/>
            <person name="Lin X."/>
            <person name="Liu S.X."/>
            <person name="Liu Z.A."/>
            <person name="Luros J.S."/>
            <person name="Maiti R."/>
            <person name="Marziali A."/>
            <person name="Militscher J."/>
            <person name="Miranda M."/>
            <person name="Nguyen M."/>
            <person name="Nierman W.C."/>
            <person name="Osborne B.I."/>
            <person name="Pai G."/>
            <person name="Peterson J."/>
            <person name="Pham P.K."/>
            <person name="Rizzo M."/>
            <person name="Rooney T."/>
            <person name="Rowley D."/>
            <person name="Sakano H."/>
            <person name="Salzberg S.L."/>
            <person name="Schwartz J.R."/>
            <person name="Shinn P."/>
            <person name="Southwick A.M."/>
            <person name="Sun H."/>
            <person name="Tallon L.J."/>
            <person name="Tambunga G."/>
            <person name="Toriumi M.J."/>
            <person name="Town C.D."/>
            <person name="Utterback T."/>
            <person name="Van Aken S."/>
            <person name="Vaysberg M."/>
            <person name="Vysotskaia V.S."/>
            <person name="Walker M."/>
            <person name="Wu D."/>
            <person name="Yu G."/>
            <person name="Fraser C.M."/>
            <person name="Venter J.C."/>
            <person name="Davis R.W."/>
        </authorList>
    </citation>
    <scope>NUCLEOTIDE SEQUENCE [LARGE SCALE GENOMIC DNA]</scope>
    <source>
        <strain>cv. Columbia</strain>
    </source>
</reference>
<reference key="2">
    <citation type="journal article" date="2017" name="Plant J.">
        <title>Araport11: a complete reannotation of the Arabidopsis thaliana reference genome.</title>
        <authorList>
            <person name="Cheng C.Y."/>
            <person name="Krishnakumar V."/>
            <person name="Chan A.P."/>
            <person name="Thibaud-Nissen F."/>
            <person name="Schobel S."/>
            <person name="Town C.D."/>
        </authorList>
    </citation>
    <scope>GENOME REANNOTATION</scope>
    <source>
        <strain>cv. Columbia</strain>
    </source>
</reference>
<reference key="3">
    <citation type="journal article" date="2003" name="Science">
        <title>Empirical analysis of transcriptional activity in the Arabidopsis genome.</title>
        <authorList>
            <person name="Yamada K."/>
            <person name="Lim J."/>
            <person name="Dale J.M."/>
            <person name="Chen H."/>
            <person name="Shinn P."/>
            <person name="Palm C.J."/>
            <person name="Southwick A.M."/>
            <person name="Wu H.C."/>
            <person name="Kim C.J."/>
            <person name="Nguyen M."/>
            <person name="Pham P.K."/>
            <person name="Cheuk R.F."/>
            <person name="Karlin-Newmann G."/>
            <person name="Liu S.X."/>
            <person name="Lam B."/>
            <person name="Sakano H."/>
            <person name="Wu T."/>
            <person name="Yu G."/>
            <person name="Miranda M."/>
            <person name="Quach H.L."/>
            <person name="Tripp M."/>
            <person name="Chang C.H."/>
            <person name="Lee J.M."/>
            <person name="Toriumi M.J."/>
            <person name="Chan M.M."/>
            <person name="Tang C.C."/>
            <person name="Onodera C.S."/>
            <person name="Deng J.M."/>
            <person name="Akiyama K."/>
            <person name="Ansari Y."/>
            <person name="Arakawa T."/>
            <person name="Banh J."/>
            <person name="Banno F."/>
            <person name="Bowser L."/>
            <person name="Brooks S.Y."/>
            <person name="Carninci P."/>
            <person name="Chao Q."/>
            <person name="Choy N."/>
            <person name="Enju A."/>
            <person name="Goldsmith A.D."/>
            <person name="Gurjal M."/>
            <person name="Hansen N.F."/>
            <person name="Hayashizaki Y."/>
            <person name="Johnson-Hopson C."/>
            <person name="Hsuan V.W."/>
            <person name="Iida K."/>
            <person name="Karnes M."/>
            <person name="Khan S."/>
            <person name="Koesema E."/>
            <person name="Ishida J."/>
            <person name="Jiang P.X."/>
            <person name="Jones T."/>
            <person name="Kawai J."/>
            <person name="Kamiya A."/>
            <person name="Meyers C."/>
            <person name="Nakajima M."/>
            <person name="Narusaka M."/>
            <person name="Seki M."/>
            <person name="Sakurai T."/>
            <person name="Satou M."/>
            <person name="Tamse R."/>
            <person name="Vaysberg M."/>
            <person name="Wallender E.K."/>
            <person name="Wong C."/>
            <person name="Yamamura Y."/>
            <person name="Yuan S."/>
            <person name="Shinozaki K."/>
            <person name="Davis R.W."/>
            <person name="Theologis A."/>
            <person name="Ecker J.R."/>
        </authorList>
    </citation>
    <scope>NUCLEOTIDE SEQUENCE [LARGE SCALE MRNA]</scope>
    <source>
        <strain>cv. Columbia</strain>
    </source>
</reference>
<reference key="4">
    <citation type="journal article" date="2003" name="Mol. Biol. Evol.">
        <title>The basic helix-loop-helix transcription factor family in plants: a genome-wide study of protein structure and functional diversity.</title>
        <authorList>
            <person name="Heim M.A."/>
            <person name="Jakoby M."/>
            <person name="Werber M."/>
            <person name="Martin C."/>
            <person name="Weisshaar B."/>
            <person name="Bailey P.C."/>
        </authorList>
    </citation>
    <scope>NUCLEOTIDE SEQUENCE [MRNA] OF 22-298</scope>
    <scope>TISSUE SPECIFICITY</scope>
    <scope>GENE FAMILY</scope>
    <scope>NOMENCLATURE</scope>
    <source>
        <strain>cv. Columbia</strain>
    </source>
</reference>
<reference key="5">
    <citation type="journal article" date="2003" name="Plant Cell">
        <title>The Arabidopsis basic/helix-loop-helix transcription factor family.</title>
        <authorList>
            <person name="Toledo-Ortiz G."/>
            <person name="Huq E."/>
            <person name="Quail P.H."/>
        </authorList>
    </citation>
    <scope>GENE FAMILY</scope>
</reference>
<reference key="6">
    <citation type="journal article" date="2003" name="Plant Cell">
        <title>Update on the basic helix-loop-helix transcription factor gene family in Arabidopsis thaliana.</title>
        <authorList>
            <person name="Bailey P.C."/>
            <person name="Martin C."/>
            <person name="Toledo-Ortiz G."/>
            <person name="Quail P.H."/>
            <person name="Huq E."/>
            <person name="Heim M.A."/>
            <person name="Jakoby M."/>
            <person name="Werber M."/>
            <person name="Weisshaar B."/>
        </authorList>
    </citation>
    <scope>GENE FAMILY</scope>
    <scope>NOMENCLATURE</scope>
</reference>
<reference key="7">
    <citation type="journal article" date="2007" name="Science">
        <title>An ancient mechanism controls the development of cells with a rooting function in land plants.</title>
        <authorList>
            <person name="Menand B."/>
            <person name="Yi K."/>
            <person name="Jouannic S."/>
            <person name="Hoffmann L."/>
            <person name="Ryan E."/>
            <person name="Linstead P."/>
            <person name="Schaefer D.G."/>
            <person name="Dolan L."/>
        </authorList>
    </citation>
    <scope>FUNCTION</scope>
    <scope>SUBCELLULAR LOCATION</scope>
    <scope>TISSUE SPECIFICITY</scope>
    <scope>DISRUPTION PHENOTYPE</scope>
</reference>
<reference key="8">
    <citation type="journal article" date="2010" name="Nat. Genet.">
        <title>A basic helix-loop-helix transcription factor controls cell growth and size in root hairs.</title>
        <authorList>
            <person name="Yi K."/>
            <person name="Menand B."/>
            <person name="Bell E."/>
            <person name="Dolan L."/>
        </authorList>
    </citation>
    <scope>FUNCTION</scope>
</reference>
<reference key="9">
    <citation type="journal article" date="2020" name="Plant Cell">
        <title>Arabidopsis JAZ proteins interact with and suppress RHD6 transcription factor to regulate jasmonate-stimulated root hair development.</title>
        <authorList>
            <person name="Han X."/>
            <person name="Zhang M."/>
            <person name="Yang M."/>
            <person name="Hu Y."/>
        </authorList>
    </citation>
    <scope>FUNCTION</scope>
    <scope>INTERACTION WITH RSL1; TIFY10B/JAZ2; TIFY6A/JAZ4; TIFY5A/JAZ8; TIFY7/JAZ9 AND TIFY9/JAZ10</scope>
    <scope>SUBCELLULAR LOCATION</scope>
    <scope>INDUCTION BY JASMONATE</scope>
</reference>
<comment type="function">
    <text evidence="4 5 6">Transcription factor that is specifically required for the development of root hairs (PubMed:17556585). Acts with RSL1 to positively regulate root hair development (PubMed:17556585). Acts downstream of genes that regulate epidermal pattern formation, such as GL2 (PubMed:17556585). Targets directly RSL4, another transcription factor involved in the regulation of root hair elongation (PubMed:20139979). Acts with RSL1 as transcription factor that integrates a jasmonate (JA) signaling pathway that stimulates root hair growth (PubMed:31988260).</text>
</comment>
<comment type="subunit">
    <text evidence="6 9">Homodimer (Probable). Forms heterodimers with RSL1 (PubMed:31988260). Interacts with TIFY10B/JAZ2, TIFY6A/JAZ4, TIFY5A/JAZ8, TIFY7/JAZ9 and TIFY9/JAZ10 (PubMed:31988260).</text>
</comment>
<comment type="interaction">
    <interactant intactId="EBI-4424338">
        <id>Q9C707</id>
    </interactant>
    <interactant intactId="EBI-15193531">
        <id>Q5XVH0</id>
        <label>BHLH109</label>
    </interactant>
    <organismsDiffer>false</organismsDiffer>
    <experiments>3</experiments>
</comment>
<comment type="interaction">
    <interactant intactId="EBI-4424338">
        <id>Q9C707</id>
    </interactant>
    <interactant intactId="EBI-4442198">
        <id>Q93Y00</id>
        <label>BHLH7</label>
    </interactant>
    <organismsDiffer>false</organismsDiffer>
    <experiments>3</experiments>
</comment>
<comment type="subcellular location">
    <subcellularLocation>
        <location evidence="1 4 6">Nucleus</location>
    </subcellularLocation>
</comment>
<comment type="tissue specificity">
    <text evidence="3 4">Expressed constitutively in flowers (PubMed:12679534). Expressed in root epidermal hair cells (PubMed:17556585).</text>
</comment>
<comment type="induction">
    <text evidence="6">Induced by jasmonate (JA) treatment.</text>
</comment>
<comment type="disruption phenotype">
    <text evidence="4">Strong reduction in root hair number and density in seedlings (PubMed:17556585). The double mutant seedlings rhd6-3 and rsl1-1 do not develop root hairs (PubMed:17556585).</text>
</comment>
<name>RHD6_ARATH</name>
<organism>
    <name type="scientific">Arabidopsis thaliana</name>
    <name type="common">Mouse-ear cress</name>
    <dbReference type="NCBI Taxonomy" id="3702"/>
    <lineage>
        <taxon>Eukaryota</taxon>
        <taxon>Viridiplantae</taxon>
        <taxon>Streptophyta</taxon>
        <taxon>Embryophyta</taxon>
        <taxon>Tracheophyta</taxon>
        <taxon>Spermatophyta</taxon>
        <taxon>Magnoliopsida</taxon>
        <taxon>eudicotyledons</taxon>
        <taxon>Gunneridae</taxon>
        <taxon>Pentapetalae</taxon>
        <taxon>rosids</taxon>
        <taxon>malvids</taxon>
        <taxon>Brassicales</taxon>
        <taxon>Brassicaceae</taxon>
        <taxon>Camelineae</taxon>
        <taxon>Arabidopsis</taxon>
    </lineage>
</organism>
<feature type="chain" id="PRO_0000358775" description="Transcription factor RHD6">
    <location>
        <begin position="1"/>
        <end position="298"/>
    </location>
</feature>
<feature type="domain" description="bHLH" evidence="1">
    <location>
        <begin position="201"/>
        <end position="250"/>
    </location>
</feature>
<feature type="region of interest" description="Disordered" evidence="2">
    <location>
        <begin position="1"/>
        <end position="58"/>
    </location>
</feature>
<feature type="region of interest" description="Disordered" evidence="2">
    <location>
        <begin position="157"/>
        <end position="213"/>
    </location>
</feature>
<feature type="region of interest" description="Basic motif" evidence="1">
    <location>
        <begin position="201"/>
        <end position="214"/>
    </location>
</feature>
<feature type="region of interest" description="Helix-loop-helix motif" evidence="1">
    <location>
        <begin position="215"/>
        <end position="250"/>
    </location>
</feature>
<feature type="compositionally biased region" description="Low complexity" evidence="2">
    <location>
        <begin position="15"/>
        <end position="27"/>
    </location>
</feature>
<feature type="compositionally biased region" description="Polar residues" evidence="2">
    <location>
        <begin position="157"/>
        <end position="168"/>
    </location>
</feature>
<feature type="compositionally biased region" description="Polar residues" evidence="2">
    <location>
        <begin position="177"/>
        <end position="190"/>
    </location>
</feature>
<feature type="compositionally biased region" description="Low complexity" evidence="2">
    <location>
        <begin position="191"/>
        <end position="205"/>
    </location>
</feature>
<dbReference type="EMBL" id="AC074025">
    <property type="protein sequence ID" value="AAG51154.1"/>
    <property type="molecule type" value="Genomic_DNA"/>
</dbReference>
<dbReference type="EMBL" id="CP002684">
    <property type="protein sequence ID" value="AEE34512.1"/>
    <property type="molecule type" value="Genomic_DNA"/>
</dbReference>
<dbReference type="EMBL" id="AY128310">
    <property type="protein sequence ID" value="AAM91513.1"/>
    <property type="molecule type" value="mRNA"/>
</dbReference>
<dbReference type="EMBL" id="BT006320">
    <property type="protein sequence ID" value="AAP13428.1"/>
    <property type="molecule type" value="mRNA"/>
</dbReference>
<dbReference type="EMBL" id="AF488615">
    <property type="status" value="NOT_ANNOTATED_CDS"/>
    <property type="molecule type" value="mRNA"/>
</dbReference>
<dbReference type="PIR" id="C96690">
    <property type="entry name" value="C96690"/>
</dbReference>
<dbReference type="RefSeq" id="NP_176820.1">
    <property type="nucleotide sequence ID" value="NM_105318.3"/>
</dbReference>
<dbReference type="SMR" id="Q9C707"/>
<dbReference type="BioGRID" id="28186">
    <property type="interactions" value="12"/>
</dbReference>
<dbReference type="FunCoup" id="Q9C707">
    <property type="interactions" value="129"/>
</dbReference>
<dbReference type="IntAct" id="Q9C707">
    <property type="interactions" value="14"/>
</dbReference>
<dbReference type="STRING" id="3702.Q9C707"/>
<dbReference type="PaxDb" id="3702-AT1G66470.1"/>
<dbReference type="ProteomicsDB" id="240766"/>
<dbReference type="EnsemblPlants" id="AT1G66470.1">
    <property type="protein sequence ID" value="AT1G66470.1"/>
    <property type="gene ID" value="AT1G66470"/>
</dbReference>
<dbReference type="GeneID" id="842965"/>
<dbReference type="Gramene" id="AT1G66470.1">
    <property type="protein sequence ID" value="AT1G66470.1"/>
    <property type="gene ID" value="AT1G66470"/>
</dbReference>
<dbReference type="KEGG" id="ath:AT1G66470"/>
<dbReference type="Araport" id="AT1G66470"/>
<dbReference type="TAIR" id="AT1G66470">
    <property type="gene designation" value="RHD6"/>
</dbReference>
<dbReference type="eggNOG" id="ENOG502QT4N">
    <property type="taxonomic scope" value="Eukaryota"/>
</dbReference>
<dbReference type="HOGENOM" id="CLU_072935_0_0_1"/>
<dbReference type="InParanoid" id="Q9C707"/>
<dbReference type="OMA" id="PPAISCG"/>
<dbReference type="PhylomeDB" id="Q9C707"/>
<dbReference type="PRO" id="PR:Q9C707"/>
<dbReference type="Proteomes" id="UP000006548">
    <property type="component" value="Chromosome 1"/>
</dbReference>
<dbReference type="ExpressionAtlas" id="Q9C707">
    <property type="expression patterns" value="baseline and differential"/>
</dbReference>
<dbReference type="GO" id="GO:0005739">
    <property type="term" value="C:mitochondrion"/>
    <property type="evidence" value="ECO:0007005"/>
    <property type="project" value="TAIR"/>
</dbReference>
<dbReference type="GO" id="GO:0005634">
    <property type="term" value="C:nucleus"/>
    <property type="evidence" value="ECO:0007669"/>
    <property type="project" value="UniProtKB-SubCell"/>
</dbReference>
<dbReference type="GO" id="GO:0003677">
    <property type="term" value="F:DNA binding"/>
    <property type="evidence" value="ECO:0007669"/>
    <property type="project" value="UniProtKB-KW"/>
</dbReference>
<dbReference type="GO" id="GO:0003700">
    <property type="term" value="F:DNA-binding transcription factor activity"/>
    <property type="evidence" value="ECO:0000250"/>
    <property type="project" value="TAIR"/>
</dbReference>
<dbReference type="GO" id="GO:0046983">
    <property type="term" value="F:protein dimerization activity"/>
    <property type="evidence" value="ECO:0007669"/>
    <property type="project" value="InterPro"/>
</dbReference>
<dbReference type="GO" id="GO:0048766">
    <property type="term" value="P:root hair initiation"/>
    <property type="evidence" value="ECO:0000315"/>
    <property type="project" value="TAIR"/>
</dbReference>
<dbReference type="CDD" id="cd11454">
    <property type="entry name" value="bHLH_AtIND_like"/>
    <property type="match status" value="1"/>
</dbReference>
<dbReference type="FunFam" id="4.10.280.10:FF:000046">
    <property type="entry name" value="Transcription factor bHLH83"/>
    <property type="match status" value="1"/>
</dbReference>
<dbReference type="Gene3D" id="4.10.280.10">
    <property type="entry name" value="Helix-loop-helix DNA-binding domain"/>
    <property type="match status" value="1"/>
</dbReference>
<dbReference type="InterPro" id="IPR011598">
    <property type="entry name" value="bHLH_dom"/>
</dbReference>
<dbReference type="InterPro" id="IPR036638">
    <property type="entry name" value="HLH_DNA-bd_sf"/>
</dbReference>
<dbReference type="InterPro" id="IPR045843">
    <property type="entry name" value="IND-like"/>
</dbReference>
<dbReference type="PANTHER" id="PTHR45914:SF59">
    <property type="entry name" value="TRANSCRIPTION FACTOR BHLH83-LIKE"/>
    <property type="match status" value="1"/>
</dbReference>
<dbReference type="PANTHER" id="PTHR45914">
    <property type="entry name" value="TRANSCRIPTION FACTOR HEC3-RELATED"/>
    <property type="match status" value="1"/>
</dbReference>
<dbReference type="Pfam" id="PF00010">
    <property type="entry name" value="HLH"/>
    <property type="match status" value="1"/>
</dbReference>
<dbReference type="SMART" id="SM00353">
    <property type="entry name" value="HLH"/>
    <property type="match status" value="1"/>
</dbReference>
<dbReference type="SUPFAM" id="SSF47459">
    <property type="entry name" value="HLH, helix-loop-helix DNA-binding domain"/>
    <property type="match status" value="1"/>
</dbReference>
<dbReference type="PROSITE" id="PS50888">
    <property type="entry name" value="BHLH"/>
    <property type="match status" value="1"/>
</dbReference>
<protein>
    <recommendedName>
        <fullName evidence="9">Transcription factor RHD6</fullName>
    </recommendedName>
    <alternativeName>
        <fullName evidence="7">Basic helix-loop-helix protein 83</fullName>
        <shortName evidence="7">AtbHLH83</shortName>
        <shortName evidence="7">bHLH 83</shortName>
    </alternativeName>
    <alternativeName>
        <fullName evidence="8">Protein ROOT HAIR DEFECTIVE 6</fullName>
        <shortName evidence="8">AtRHD6</shortName>
    </alternativeName>
    <alternativeName>
        <fullName evidence="9">Transcription factor EN 112</fullName>
    </alternativeName>
    <alternativeName>
        <fullName evidence="9">Transcription factor bHLH83</fullName>
    </alternativeName>
    <alternativeName>
        <fullName evidence="7">bHLH transcription factor bHLH083</fullName>
    </alternativeName>
</protein>
<keyword id="KW-0238">DNA-binding</keyword>
<keyword id="KW-0539">Nucleus</keyword>
<keyword id="KW-1185">Reference proteome</keyword>
<keyword id="KW-0804">Transcription</keyword>
<keyword id="KW-0805">Transcription regulation</keyword>
<accession>Q9C707</accession>
<gene>
    <name evidence="8" type="primary">RHD6</name>
    <name evidence="7" type="synonym">BHLH83</name>
    <name evidence="9" type="synonym">EN112</name>
    <name evidence="11" type="ordered locus">At1g66470</name>
    <name evidence="10" type="ORF">F28G11.9</name>
</gene>
<sequence>MALVNDHPNETNYLSKQNSSSSEDLSSPGLDQPDAAYAGGGGGGGSASSSSTMNSDHQQHQGFVFYPSGEDHHNSLMDFNGSSFLNFDHHESFPPPAISCGGSSGGGGFSFLEGNNMSYGFTNWNHQHHMDIISPRSTETPQGQKDWLYSDSTVVTTGSRNESLSPKSAGNKRSHTGESTQPSKKLSSGVTGKTKPKPTTSPKDPQSLAAKNRRERISERLKILQELVPNGTKVDLVTMLEKAISYVKFLQVQVKVLATDEFWPAQGGKAPDISQVKDAIDAILSSSQRDRNSNLITN</sequence>
<evidence type="ECO:0000255" key="1">
    <source>
        <dbReference type="PROSITE-ProRule" id="PRU00981"/>
    </source>
</evidence>
<evidence type="ECO:0000256" key="2">
    <source>
        <dbReference type="SAM" id="MobiDB-lite"/>
    </source>
</evidence>
<evidence type="ECO:0000269" key="3">
    <source>
    </source>
</evidence>
<evidence type="ECO:0000269" key="4">
    <source>
    </source>
</evidence>
<evidence type="ECO:0000269" key="5">
    <source>
    </source>
</evidence>
<evidence type="ECO:0000269" key="6">
    <source>
    </source>
</evidence>
<evidence type="ECO:0000303" key="7">
    <source>
    </source>
</evidence>
<evidence type="ECO:0000303" key="8">
    <source>
    </source>
</evidence>
<evidence type="ECO:0000305" key="9"/>
<evidence type="ECO:0000312" key="10">
    <source>
        <dbReference type="EMBL" id="AAG51154.1"/>
    </source>
</evidence>
<evidence type="ECO:0000312" key="11">
    <source>
        <dbReference type="PROSITE" id="PS50888"/>
    </source>
</evidence>
<proteinExistence type="evidence at protein level"/>